<feature type="chain" id="PRO_0000247518" description="Zinc finger protein 467">
    <location>
        <begin position="1"/>
        <end position="594"/>
    </location>
</feature>
<feature type="zinc finger region" description="C2H2-type 1" evidence="2">
    <location>
        <begin position="160"/>
        <end position="182"/>
    </location>
</feature>
<feature type="zinc finger region" description="C2H2-type 2" evidence="2">
    <location>
        <begin position="188"/>
        <end position="210"/>
    </location>
</feature>
<feature type="zinc finger region" description="C2H2-type 3" evidence="2">
    <location>
        <begin position="216"/>
        <end position="238"/>
    </location>
</feature>
<feature type="zinc finger region" description="C2H2-type 4" evidence="2">
    <location>
        <begin position="244"/>
        <end position="266"/>
    </location>
</feature>
<feature type="zinc finger region" description="C2H2-type 5" evidence="2">
    <location>
        <begin position="272"/>
        <end position="294"/>
    </location>
</feature>
<feature type="zinc finger region" description="C2H2-type 6" evidence="2">
    <location>
        <begin position="300"/>
        <end position="322"/>
    </location>
</feature>
<feature type="zinc finger region" description="C2H2-type 7" evidence="2">
    <location>
        <begin position="355"/>
        <end position="377"/>
    </location>
</feature>
<feature type="zinc finger region" description="C2H2-type 8" evidence="2">
    <location>
        <begin position="430"/>
        <end position="452"/>
    </location>
</feature>
<feature type="zinc finger region" description="C2H2-type 9" evidence="2">
    <location>
        <begin position="458"/>
        <end position="480"/>
    </location>
</feature>
<feature type="zinc finger region" description="C2H2-type 10" evidence="2">
    <location>
        <begin position="486"/>
        <end position="508"/>
    </location>
</feature>
<feature type="zinc finger region" description="C2H2-type 11" evidence="2">
    <location>
        <begin position="514"/>
        <end position="536"/>
    </location>
</feature>
<feature type="zinc finger region" description="C2H2-type 12" evidence="2">
    <location>
        <begin position="542"/>
        <end position="564"/>
    </location>
</feature>
<feature type="region of interest" description="Interaction with STAT3" evidence="4">
    <location>
        <begin position="1"/>
        <end position="183"/>
    </location>
</feature>
<feature type="region of interest" description="Disordered" evidence="3">
    <location>
        <begin position="1"/>
        <end position="86"/>
    </location>
</feature>
<feature type="region of interest" description="Disordered" evidence="3">
    <location>
        <begin position="313"/>
        <end position="351"/>
    </location>
</feature>
<feature type="compositionally biased region" description="Polar residues" evidence="3">
    <location>
        <begin position="31"/>
        <end position="47"/>
    </location>
</feature>
<feature type="compositionally biased region" description="Basic and acidic residues" evidence="3">
    <location>
        <begin position="54"/>
        <end position="64"/>
    </location>
</feature>
<feature type="cross-link" description="Glycyl lysine isopeptide (Lys-Gly) (interchain with G-Cter in SUMO2)" evidence="1">
    <location>
        <position position="97"/>
    </location>
</feature>
<feature type="cross-link" description="Glycyl lysine isopeptide (Lys-Gly) (interchain with G-Cter in SUMO2)" evidence="1">
    <location>
        <position position="368"/>
    </location>
</feature>
<feature type="sequence conflict" description="In Ref. 2; BAA95099." evidence="6" ref="2">
    <original>S</original>
    <variation>G</variation>
    <location>
        <position position="511"/>
    </location>
</feature>
<dbReference type="EMBL" id="AB076746">
    <property type="protein sequence ID" value="BAC00997.1"/>
    <property type="molecule type" value="mRNA"/>
</dbReference>
<dbReference type="EMBL" id="AB041616">
    <property type="protein sequence ID" value="BAA95099.1"/>
    <property type="status" value="ALT_FRAME"/>
    <property type="molecule type" value="mRNA"/>
</dbReference>
<dbReference type="EMBL" id="AK033146">
    <property type="protein sequence ID" value="BAC28171.1"/>
    <property type="molecule type" value="mRNA"/>
</dbReference>
<dbReference type="EMBL" id="BC029859">
    <property type="protein sequence ID" value="AAH29859.1"/>
    <property type="molecule type" value="mRNA"/>
</dbReference>
<dbReference type="CCDS" id="CCDS51764.1"/>
<dbReference type="RefSeq" id="NP_001078884.1">
    <property type="nucleotide sequence ID" value="NM_001085415.1"/>
</dbReference>
<dbReference type="RefSeq" id="NP_001078885.1">
    <property type="nucleotide sequence ID" value="NM_001085416.1"/>
</dbReference>
<dbReference type="RefSeq" id="NP_065614.2">
    <property type="nucleotide sequence ID" value="NM_020589.2"/>
</dbReference>
<dbReference type="SMR" id="Q8JZL0"/>
<dbReference type="BioGRID" id="213109">
    <property type="interactions" value="4"/>
</dbReference>
<dbReference type="FunCoup" id="Q8JZL0">
    <property type="interactions" value="418"/>
</dbReference>
<dbReference type="IntAct" id="Q8JZL0">
    <property type="interactions" value="1"/>
</dbReference>
<dbReference type="STRING" id="10090.ENSMUSP00000110208"/>
<dbReference type="GlyGen" id="Q8JZL0">
    <property type="glycosylation" value="1 site"/>
</dbReference>
<dbReference type="iPTMnet" id="Q8JZL0"/>
<dbReference type="PhosphoSitePlus" id="Q8JZL0"/>
<dbReference type="PaxDb" id="10090-ENSMUSP00000110208"/>
<dbReference type="ProteomicsDB" id="275079"/>
<dbReference type="Antibodypedia" id="51657">
    <property type="antibodies" value="13 antibodies from 8 providers"/>
</dbReference>
<dbReference type="DNASU" id="68910"/>
<dbReference type="Ensembl" id="ENSMUST00000114560.8">
    <property type="protein sequence ID" value="ENSMUSP00000110207.2"/>
    <property type="gene ID" value="ENSMUSG00000068551.13"/>
</dbReference>
<dbReference type="Ensembl" id="ENSMUST00000114561.9">
    <property type="protein sequence ID" value="ENSMUSP00000110208.3"/>
    <property type="gene ID" value="ENSMUSG00000068551.13"/>
</dbReference>
<dbReference type="GeneID" id="68910"/>
<dbReference type="KEGG" id="mmu:68910"/>
<dbReference type="UCSC" id="uc009buf.1">
    <property type="organism name" value="mouse"/>
</dbReference>
<dbReference type="AGR" id="MGI:1916160"/>
<dbReference type="CTD" id="68910"/>
<dbReference type="MGI" id="MGI:1916160">
    <property type="gene designation" value="Zfp467"/>
</dbReference>
<dbReference type="VEuPathDB" id="HostDB:ENSMUSG00000068551"/>
<dbReference type="eggNOG" id="KOG1721">
    <property type="taxonomic scope" value="Eukaryota"/>
</dbReference>
<dbReference type="GeneTree" id="ENSGT00940000162497"/>
<dbReference type="HOGENOM" id="CLU_002678_73_2_1"/>
<dbReference type="InParanoid" id="Q8JZL0"/>
<dbReference type="OMA" id="QCAQCTR"/>
<dbReference type="OrthoDB" id="8117402at2759"/>
<dbReference type="PhylomeDB" id="Q8JZL0"/>
<dbReference type="TreeFam" id="TF326846"/>
<dbReference type="BioGRID-ORCS" id="68910">
    <property type="hits" value="2 hits in 77 CRISPR screens"/>
</dbReference>
<dbReference type="PRO" id="PR:Q8JZL0"/>
<dbReference type="Proteomes" id="UP000000589">
    <property type="component" value="Chromosome 6"/>
</dbReference>
<dbReference type="RNAct" id="Q8JZL0">
    <property type="molecule type" value="protein"/>
</dbReference>
<dbReference type="Bgee" id="ENSMUSG00000068551">
    <property type="expression patterns" value="Expressed in pigmented layer of retina and 248 other cell types or tissues"/>
</dbReference>
<dbReference type="ExpressionAtlas" id="Q8JZL0">
    <property type="expression patterns" value="baseline and differential"/>
</dbReference>
<dbReference type="GO" id="GO:0005634">
    <property type="term" value="C:nucleus"/>
    <property type="evidence" value="ECO:0000314"/>
    <property type="project" value="MGI"/>
</dbReference>
<dbReference type="GO" id="GO:0003677">
    <property type="term" value="F:DNA binding"/>
    <property type="evidence" value="ECO:0000314"/>
    <property type="project" value="MGI"/>
</dbReference>
<dbReference type="GO" id="GO:0008270">
    <property type="term" value="F:zinc ion binding"/>
    <property type="evidence" value="ECO:0007669"/>
    <property type="project" value="UniProtKB-KW"/>
</dbReference>
<dbReference type="GO" id="GO:0006355">
    <property type="term" value="P:regulation of DNA-templated transcription"/>
    <property type="evidence" value="ECO:0000314"/>
    <property type="project" value="MGI"/>
</dbReference>
<dbReference type="FunFam" id="3.30.160.60:FF:000214">
    <property type="entry name" value="replication initiator 1 isoform X1"/>
    <property type="match status" value="1"/>
</dbReference>
<dbReference type="FunFam" id="3.30.160.60:FF:000750">
    <property type="entry name" value="replication initiator 1 isoform X2"/>
    <property type="match status" value="2"/>
</dbReference>
<dbReference type="FunFam" id="3.30.160.60:FF:001598">
    <property type="entry name" value="Zinc finger protein 467"/>
    <property type="match status" value="1"/>
</dbReference>
<dbReference type="FunFam" id="3.30.160.60:FF:001683">
    <property type="entry name" value="Zinc finger protein 467"/>
    <property type="match status" value="1"/>
</dbReference>
<dbReference type="FunFam" id="3.30.160.60:FF:001800">
    <property type="entry name" value="Zinc finger protein 467"/>
    <property type="match status" value="1"/>
</dbReference>
<dbReference type="FunFam" id="3.30.160.60:FF:001850">
    <property type="entry name" value="Zinc finger protein 467"/>
    <property type="match status" value="1"/>
</dbReference>
<dbReference type="FunFam" id="3.30.160.60:FF:001993">
    <property type="entry name" value="Zinc finger protein 467"/>
    <property type="match status" value="1"/>
</dbReference>
<dbReference type="FunFam" id="3.30.160.60:FF:001789">
    <property type="entry name" value="zinc finger protein 467"/>
    <property type="match status" value="1"/>
</dbReference>
<dbReference type="FunFam" id="3.30.160.60:FF:000320">
    <property type="entry name" value="Zinc finger protein 777"/>
    <property type="match status" value="3"/>
</dbReference>
<dbReference type="Gene3D" id="3.30.160.60">
    <property type="entry name" value="Classic Zinc Finger"/>
    <property type="match status" value="12"/>
</dbReference>
<dbReference type="InterPro" id="IPR050752">
    <property type="entry name" value="C2H2-ZF_domain"/>
</dbReference>
<dbReference type="InterPro" id="IPR036236">
    <property type="entry name" value="Znf_C2H2_sf"/>
</dbReference>
<dbReference type="InterPro" id="IPR013087">
    <property type="entry name" value="Znf_C2H2_type"/>
</dbReference>
<dbReference type="PANTHER" id="PTHR24384:SF240">
    <property type="entry name" value="C2H2-TYPE DOMAIN-CONTAINING PROTEIN"/>
    <property type="match status" value="1"/>
</dbReference>
<dbReference type="PANTHER" id="PTHR24384">
    <property type="entry name" value="FINGER PUTATIVE TRANSCRIPTION FACTOR FAMILY-RELATED"/>
    <property type="match status" value="1"/>
</dbReference>
<dbReference type="Pfam" id="PF00096">
    <property type="entry name" value="zf-C2H2"/>
    <property type="match status" value="10"/>
</dbReference>
<dbReference type="SMART" id="SM00355">
    <property type="entry name" value="ZnF_C2H2"/>
    <property type="match status" value="12"/>
</dbReference>
<dbReference type="SUPFAM" id="SSF57667">
    <property type="entry name" value="beta-beta-alpha zinc fingers"/>
    <property type="match status" value="8"/>
</dbReference>
<dbReference type="PROSITE" id="PS00028">
    <property type="entry name" value="ZINC_FINGER_C2H2_1"/>
    <property type="match status" value="12"/>
</dbReference>
<dbReference type="PROSITE" id="PS50157">
    <property type="entry name" value="ZINC_FINGER_C2H2_2"/>
    <property type="match status" value="12"/>
</dbReference>
<evidence type="ECO:0000250" key="1">
    <source>
        <dbReference type="UniProtKB" id="Q7Z7K2"/>
    </source>
</evidence>
<evidence type="ECO:0000255" key="2">
    <source>
        <dbReference type="PROSITE-ProRule" id="PRU00042"/>
    </source>
</evidence>
<evidence type="ECO:0000256" key="3">
    <source>
        <dbReference type="SAM" id="MobiDB-lite"/>
    </source>
</evidence>
<evidence type="ECO:0000269" key="4">
    <source>
    </source>
</evidence>
<evidence type="ECO:0000269" key="5">
    <source>
    </source>
</evidence>
<evidence type="ECO:0000305" key="6"/>
<reference key="1">
    <citation type="journal article" date="2002" name="EMBO J.">
        <title>A novel nuclear zinc finger protein EZI enhances nuclear retention and transactivation of STAT3.</title>
        <authorList>
            <person name="Nakayama K."/>
            <person name="Kim K.-W."/>
            <person name="Miyajima A."/>
        </authorList>
    </citation>
    <scope>NUCLEOTIDE SEQUENCE [MRNA]</scope>
    <scope>FUNCTION</scope>
    <scope>SUBCELLULAR LOCATION</scope>
    <scope>INTERACTION WITH STAT3</scope>
</reference>
<reference key="2">
    <citation type="submission" date="2000-04" db="EMBL/GenBank/DDBJ databases">
        <title>Isolation of full-length cDNA clones from mouse brain cDNA library made by oligo-capping method.</title>
        <authorList>
            <person name="Osada N."/>
            <person name="Kusuda J."/>
            <person name="Tanuma R."/>
            <person name="Ito A."/>
            <person name="Hirata M."/>
            <person name="Sugano S."/>
            <person name="Hashimoto K."/>
        </authorList>
    </citation>
    <scope>NUCLEOTIDE SEQUENCE [LARGE SCALE MRNA]</scope>
    <source>
        <strain>C57BL/6J</strain>
        <tissue>Brain</tissue>
    </source>
</reference>
<reference key="3">
    <citation type="journal article" date="2005" name="Science">
        <title>The transcriptional landscape of the mammalian genome.</title>
        <authorList>
            <person name="Carninci P."/>
            <person name="Kasukawa T."/>
            <person name="Katayama S."/>
            <person name="Gough J."/>
            <person name="Frith M.C."/>
            <person name="Maeda N."/>
            <person name="Oyama R."/>
            <person name="Ravasi T."/>
            <person name="Lenhard B."/>
            <person name="Wells C."/>
            <person name="Kodzius R."/>
            <person name="Shimokawa K."/>
            <person name="Bajic V.B."/>
            <person name="Brenner S.E."/>
            <person name="Batalov S."/>
            <person name="Forrest A.R."/>
            <person name="Zavolan M."/>
            <person name="Davis M.J."/>
            <person name="Wilming L.G."/>
            <person name="Aidinis V."/>
            <person name="Allen J.E."/>
            <person name="Ambesi-Impiombato A."/>
            <person name="Apweiler R."/>
            <person name="Aturaliya R.N."/>
            <person name="Bailey T.L."/>
            <person name="Bansal M."/>
            <person name="Baxter L."/>
            <person name="Beisel K.W."/>
            <person name="Bersano T."/>
            <person name="Bono H."/>
            <person name="Chalk A.M."/>
            <person name="Chiu K.P."/>
            <person name="Choudhary V."/>
            <person name="Christoffels A."/>
            <person name="Clutterbuck D.R."/>
            <person name="Crowe M.L."/>
            <person name="Dalla E."/>
            <person name="Dalrymple B.P."/>
            <person name="de Bono B."/>
            <person name="Della Gatta G."/>
            <person name="di Bernardo D."/>
            <person name="Down T."/>
            <person name="Engstrom P."/>
            <person name="Fagiolini M."/>
            <person name="Faulkner G."/>
            <person name="Fletcher C.F."/>
            <person name="Fukushima T."/>
            <person name="Furuno M."/>
            <person name="Futaki S."/>
            <person name="Gariboldi M."/>
            <person name="Georgii-Hemming P."/>
            <person name="Gingeras T.R."/>
            <person name="Gojobori T."/>
            <person name="Green R.E."/>
            <person name="Gustincich S."/>
            <person name="Harbers M."/>
            <person name="Hayashi Y."/>
            <person name="Hensch T.K."/>
            <person name="Hirokawa N."/>
            <person name="Hill D."/>
            <person name="Huminiecki L."/>
            <person name="Iacono M."/>
            <person name="Ikeo K."/>
            <person name="Iwama A."/>
            <person name="Ishikawa T."/>
            <person name="Jakt M."/>
            <person name="Kanapin A."/>
            <person name="Katoh M."/>
            <person name="Kawasawa Y."/>
            <person name="Kelso J."/>
            <person name="Kitamura H."/>
            <person name="Kitano H."/>
            <person name="Kollias G."/>
            <person name="Krishnan S.P."/>
            <person name="Kruger A."/>
            <person name="Kummerfeld S.K."/>
            <person name="Kurochkin I.V."/>
            <person name="Lareau L.F."/>
            <person name="Lazarevic D."/>
            <person name="Lipovich L."/>
            <person name="Liu J."/>
            <person name="Liuni S."/>
            <person name="McWilliam S."/>
            <person name="Madan Babu M."/>
            <person name="Madera M."/>
            <person name="Marchionni L."/>
            <person name="Matsuda H."/>
            <person name="Matsuzawa S."/>
            <person name="Miki H."/>
            <person name="Mignone F."/>
            <person name="Miyake S."/>
            <person name="Morris K."/>
            <person name="Mottagui-Tabar S."/>
            <person name="Mulder N."/>
            <person name="Nakano N."/>
            <person name="Nakauchi H."/>
            <person name="Ng P."/>
            <person name="Nilsson R."/>
            <person name="Nishiguchi S."/>
            <person name="Nishikawa S."/>
            <person name="Nori F."/>
            <person name="Ohara O."/>
            <person name="Okazaki Y."/>
            <person name="Orlando V."/>
            <person name="Pang K.C."/>
            <person name="Pavan W.J."/>
            <person name="Pavesi G."/>
            <person name="Pesole G."/>
            <person name="Petrovsky N."/>
            <person name="Piazza S."/>
            <person name="Reed J."/>
            <person name="Reid J.F."/>
            <person name="Ring B.Z."/>
            <person name="Ringwald M."/>
            <person name="Rost B."/>
            <person name="Ruan Y."/>
            <person name="Salzberg S.L."/>
            <person name="Sandelin A."/>
            <person name="Schneider C."/>
            <person name="Schoenbach C."/>
            <person name="Sekiguchi K."/>
            <person name="Semple C.A."/>
            <person name="Seno S."/>
            <person name="Sessa L."/>
            <person name="Sheng Y."/>
            <person name="Shibata Y."/>
            <person name="Shimada H."/>
            <person name="Shimada K."/>
            <person name="Silva D."/>
            <person name="Sinclair B."/>
            <person name="Sperling S."/>
            <person name="Stupka E."/>
            <person name="Sugiura K."/>
            <person name="Sultana R."/>
            <person name="Takenaka Y."/>
            <person name="Taki K."/>
            <person name="Tammoja K."/>
            <person name="Tan S.L."/>
            <person name="Tang S."/>
            <person name="Taylor M.S."/>
            <person name="Tegner J."/>
            <person name="Teichmann S.A."/>
            <person name="Ueda H.R."/>
            <person name="van Nimwegen E."/>
            <person name="Verardo R."/>
            <person name="Wei C.L."/>
            <person name="Yagi K."/>
            <person name="Yamanishi H."/>
            <person name="Zabarovsky E."/>
            <person name="Zhu S."/>
            <person name="Zimmer A."/>
            <person name="Hide W."/>
            <person name="Bult C."/>
            <person name="Grimmond S.M."/>
            <person name="Teasdale R.D."/>
            <person name="Liu E.T."/>
            <person name="Brusic V."/>
            <person name="Quackenbush J."/>
            <person name="Wahlestedt C."/>
            <person name="Mattick J.S."/>
            <person name="Hume D.A."/>
            <person name="Kai C."/>
            <person name="Sasaki D."/>
            <person name="Tomaru Y."/>
            <person name="Fukuda S."/>
            <person name="Kanamori-Katayama M."/>
            <person name="Suzuki M."/>
            <person name="Aoki J."/>
            <person name="Arakawa T."/>
            <person name="Iida J."/>
            <person name="Imamura K."/>
            <person name="Itoh M."/>
            <person name="Kato T."/>
            <person name="Kawaji H."/>
            <person name="Kawagashira N."/>
            <person name="Kawashima T."/>
            <person name="Kojima M."/>
            <person name="Kondo S."/>
            <person name="Konno H."/>
            <person name="Nakano K."/>
            <person name="Ninomiya N."/>
            <person name="Nishio T."/>
            <person name="Okada M."/>
            <person name="Plessy C."/>
            <person name="Shibata K."/>
            <person name="Shiraki T."/>
            <person name="Suzuki S."/>
            <person name="Tagami M."/>
            <person name="Waki K."/>
            <person name="Watahiki A."/>
            <person name="Okamura-Oho Y."/>
            <person name="Suzuki H."/>
            <person name="Kawai J."/>
            <person name="Hayashizaki Y."/>
        </authorList>
    </citation>
    <scope>NUCLEOTIDE SEQUENCE [LARGE SCALE MRNA]</scope>
    <source>
        <strain>C57BL/6J</strain>
        <tissue>Testis</tissue>
    </source>
</reference>
<reference key="4">
    <citation type="journal article" date="2004" name="Genome Res.">
        <title>The status, quality, and expansion of the NIH full-length cDNA project: the Mammalian Gene Collection (MGC).</title>
        <authorList>
            <consortium name="The MGC Project Team"/>
        </authorList>
    </citation>
    <scope>NUCLEOTIDE SEQUENCE [LARGE SCALE MRNA]</scope>
    <source>
        <strain>FVB/N</strain>
        <tissue>Mammary tumor</tissue>
    </source>
</reference>
<reference key="5">
    <citation type="journal article" date="2011" name="J. Biol. Chem.">
        <title>Zinc finger protein 467 is a novel regulator of osteoblast and adipocyte commitment.</title>
        <authorList>
            <person name="Quach J.M."/>
            <person name="Walker E.C."/>
            <person name="Allan E."/>
            <person name="Solano M."/>
            <person name="Yokoyama A."/>
            <person name="Kato S."/>
            <person name="Sims N.A."/>
            <person name="Gillespie M.T."/>
            <person name="Martin T.J."/>
        </authorList>
    </citation>
    <scope>FUNCTION</scope>
    <scope>INDUCTION</scope>
</reference>
<organism>
    <name type="scientific">Mus musculus</name>
    <name type="common">Mouse</name>
    <dbReference type="NCBI Taxonomy" id="10090"/>
    <lineage>
        <taxon>Eukaryota</taxon>
        <taxon>Metazoa</taxon>
        <taxon>Chordata</taxon>
        <taxon>Craniata</taxon>
        <taxon>Vertebrata</taxon>
        <taxon>Euteleostomi</taxon>
        <taxon>Mammalia</taxon>
        <taxon>Eutheria</taxon>
        <taxon>Euarchontoglires</taxon>
        <taxon>Glires</taxon>
        <taxon>Rodentia</taxon>
        <taxon>Myomorpha</taxon>
        <taxon>Muroidea</taxon>
        <taxon>Muridae</taxon>
        <taxon>Murinae</taxon>
        <taxon>Mus</taxon>
        <taxon>Mus</taxon>
    </lineage>
</organism>
<accession>Q8JZL0</accession>
<accession>Q9JJ98</accession>
<gene>
    <name type="primary">Znf467</name>
    <name type="synonym">Ezi</name>
    <name type="synonym">Zfp467</name>
    <name type="ORF">MNCb-3350</name>
</gene>
<proteinExistence type="evidence at protein level"/>
<sequence length="594" mass="65633">MRETLEALNSLGFSVGQPEMAPQSEPRDGFSNAQEKMSSRGESTLHSCSGHETPGQKEGIHTEQAEAPCMGSQASTPQKAEPAGSVPGEEWMIRKVKVEDEDQEAEEEVEWPQHLSFLPSPFPTPDLGQLAVTYKLEPGTPGALGGIALSGWAPIPEKPYGCEECERRFRDQLTLRLHQRLHRGEGPCACPDCGRSFTQRAHMLLHQRSHRGERPFPCSECDKRFSKKAHLTRHLRTHTGERPYPCAECGKRFSQKIHLGSHQKTHTGERPFPCTECEKRFRKKTHLIRHQRIHTGERPYQCTQCTRSFTHKQHLVRHQRVHDAASRTRSSPDIPVAPHSPTASLTPSPPGPKPFACSHCGQSFGWKKNLATHQSLHLTEGRPFGCDECALGTNVDPAAEPSACTPHAPDCGPGSGPAAPQRTTSSERSFFCPDCGRGFAHGQHLARHRRVHTGERPFACAQCGRRFGSRPNLVAHSRAHSGARPFACAQCGRRFSRKSHLGRHQAVHTGSRPHACAVCARCFSSKTNLVRHQAIHTGSRPFSCPQCAKSFSRKTHLVRHQRIHGDAALPAPASNLSAPAWSNPSEVVPPPIFF</sequence>
<comment type="function">
    <text evidence="4 5">Transcription factor that promotes adipocyte differentiation and suppresses osteoblast differentiation in the bone marrow. Enhances the osteoclast-supporting ability of stromal cells. Binds with STAT3 the consensus sequence 5'-CTTCTGGGAAGA-3' of the acute phase response element (APRE). Transactivates several promoters including FOS, OSM and PPARG. Recruits a histone deacetylase complex.</text>
</comment>
<comment type="subunit">
    <text evidence="4">Interacts with STAT3. Enhances STAT3 activity by keeping it in the nucleus.</text>
</comment>
<comment type="subcellular location">
    <subcellularLocation>
        <location evidence="4">Nucleus</location>
    </subcellularLocation>
</comment>
<comment type="induction">
    <text evidence="5">Down-regulated by CTF1, PTH and OSM.</text>
</comment>
<comment type="similarity">
    <text evidence="6">Belongs to the krueppel C2H2-type zinc-finger protein family.</text>
</comment>
<comment type="sequence caution" evidence="6">
    <conflict type="frameshift">
        <sequence resource="EMBL-CDS" id="BAA95099"/>
    </conflict>
</comment>
<protein>
    <recommendedName>
        <fullName>Zinc finger protein 467</fullName>
    </recommendedName>
    <alternativeName>
        <fullName>Endothelial cell-derived zinc finger protein</fullName>
        <shortName>EZI</shortName>
    </alternativeName>
</protein>
<keyword id="KW-0238">DNA-binding</keyword>
<keyword id="KW-1017">Isopeptide bond</keyword>
<keyword id="KW-0479">Metal-binding</keyword>
<keyword id="KW-0539">Nucleus</keyword>
<keyword id="KW-1185">Reference proteome</keyword>
<keyword id="KW-0677">Repeat</keyword>
<keyword id="KW-0804">Transcription</keyword>
<keyword id="KW-0805">Transcription regulation</keyword>
<keyword id="KW-0832">Ubl conjugation</keyword>
<keyword id="KW-0862">Zinc</keyword>
<keyword id="KW-0863">Zinc-finger</keyword>
<name>ZN467_MOUSE</name>